<gene>
    <name evidence="1" type="primary">luxS</name>
    <name type="ordered locus">NT01EI_3227</name>
</gene>
<accession>C5BGG6</accession>
<comment type="function">
    <text evidence="1">Involved in the synthesis of autoinducer 2 (AI-2) which is secreted by bacteria and is used to communicate both the cell density and the metabolic potential of the environment. The regulation of gene expression in response to changes in cell density is called quorum sensing. Catalyzes the transformation of S-ribosylhomocysteine (RHC) to homocysteine (HC) and 4,5-dihydroxy-2,3-pentadione (DPD).</text>
</comment>
<comment type="catalytic activity">
    <reaction evidence="1">
        <text>S-(5-deoxy-D-ribos-5-yl)-L-homocysteine = (S)-4,5-dihydroxypentane-2,3-dione + L-homocysteine</text>
        <dbReference type="Rhea" id="RHEA:17753"/>
        <dbReference type="ChEBI" id="CHEBI:29484"/>
        <dbReference type="ChEBI" id="CHEBI:58195"/>
        <dbReference type="ChEBI" id="CHEBI:58199"/>
        <dbReference type="EC" id="4.4.1.21"/>
    </reaction>
</comment>
<comment type="cofactor">
    <cofactor evidence="1">
        <name>Fe cation</name>
        <dbReference type="ChEBI" id="CHEBI:24875"/>
    </cofactor>
    <text evidence="1">Binds 1 Fe cation per subunit.</text>
</comment>
<comment type="subunit">
    <text evidence="1">Homodimer.</text>
</comment>
<comment type="similarity">
    <text evidence="1">Belongs to the LuxS family.</text>
</comment>
<feature type="chain" id="PRO_1000202670" description="S-ribosylhomocysteine lyase">
    <location>
        <begin position="1"/>
        <end position="171"/>
    </location>
</feature>
<feature type="binding site" evidence="1">
    <location>
        <position position="54"/>
    </location>
    <ligand>
        <name>Fe cation</name>
        <dbReference type="ChEBI" id="CHEBI:24875"/>
    </ligand>
</feature>
<feature type="binding site" evidence="1">
    <location>
        <position position="58"/>
    </location>
    <ligand>
        <name>Fe cation</name>
        <dbReference type="ChEBI" id="CHEBI:24875"/>
    </ligand>
</feature>
<feature type="binding site" evidence="1">
    <location>
        <position position="128"/>
    </location>
    <ligand>
        <name>Fe cation</name>
        <dbReference type="ChEBI" id="CHEBI:24875"/>
    </ligand>
</feature>
<dbReference type="EC" id="4.4.1.21" evidence="1"/>
<dbReference type="EMBL" id="CP001600">
    <property type="protein sequence ID" value="ACR70372.1"/>
    <property type="molecule type" value="Genomic_DNA"/>
</dbReference>
<dbReference type="RefSeq" id="WP_015872456.1">
    <property type="nucleotide sequence ID" value="NZ_CP169062.1"/>
</dbReference>
<dbReference type="SMR" id="C5BGG6"/>
<dbReference type="STRING" id="67780.B6E78_07775"/>
<dbReference type="GeneID" id="69540093"/>
<dbReference type="KEGG" id="eic:NT01EI_3227"/>
<dbReference type="PATRIC" id="fig|634503.3.peg.2878"/>
<dbReference type="HOGENOM" id="CLU_107531_2_0_6"/>
<dbReference type="OrthoDB" id="9788129at2"/>
<dbReference type="Proteomes" id="UP000001485">
    <property type="component" value="Chromosome"/>
</dbReference>
<dbReference type="GO" id="GO:0005506">
    <property type="term" value="F:iron ion binding"/>
    <property type="evidence" value="ECO:0007669"/>
    <property type="project" value="InterPro"/>
</dbReference>
<dbReference type="GO" id="GO:0043768">
    <property type="term" value="F:S-ribosylhomocysteine lyase activity"/>
    <property type="evidence" value="ECO:0007669"/>
    <property type="project" value="UniProtKB-UniRule"/>
</dbReference>
<dbReference type="GO" id="GO:0009372">
    <property type="term" value="P:quorum sensing"/>
    <property type="evidence" value="ECO:0007669"/>
    <property type="project" value="UniProtKB-UniRule"/>
</dbReference>
<dbReference type="Gene3D" id="3.30.1360.80">
    <property type="entry name" value="S-ribosylhomocysteinase (LuxS)"/>
    <property type="match status" value="1"/>
</dbReference>
<dbReference type="HAMAP" id="MF_00091">
    <property type="entry name" value="LuxS"/>
    <property type="match status" value="1"/>
</dbReference>
<dbReference type="InterPro" id="IPR037005">
    <property type="entry name" value="LuxS_sf"/>
</dbReference>
<dbReference type="InterPro" id="IPR011249">
    <property type="entry name" value="Metalloenz_LuxS/M16"/>
</dbReference>
<dbReference type="InterPro" id="IPR003815">
    <property type="entry name" value="S-ribosylhomocysteinase"/>
</dbReference>
<dbReference type="NCBIfam" id="NF002602">
    <property type="entry name" value="PRK02260.1-2"/>
    <property type="match status" value="1"/>
</dbReference>
<dbReference type="PANTHER" id="PTHR35799">
    <property type="entry name" value="S-RIBOSYLHOMOCYSTEINE LYASE"/>
    <property type="match status" value="1"/>
</dbReference>
<dbReference type="PANTHER" id="PTHR35799:SF1">
    <property type="entry name" value="S-RIBOSYLHOMOCYSTEINE LYASE"/>
    <property type="match status" value="1"/>
</dbReference>
<dbReference type="Pfam" id="PF02664">
    <property type="entry name" value="LuxS"/>
    <property type="match status" value="1"/>
</dbReference>
<dbReference type="PIRSF" id="PIRSF006160">
    <property type="entry name" value="AI2"/>
    <property type="match status" value="1"/>
</dbReference>
<dbReference type="PRINTS" id="PR01487">
    <property type="entry name" value="LUXSPROTEIN"/>
</dbReference>
<dbReference type="SUPFAM" id="SSF63411">
    <property type="entry name" value="LuxS/MPP-like metallohydrolase"/>
    <property type="match status" value="1"/>
</dbReference>
<proteinExistence type="inferred from homology"/>
<evidence type="ECO:0000255" key="1">
    <source>
        <dbReference type="HAMAP-Rule" id="MF_00091"/>
    </source>
</evidence>
<organism>
    <name type="scientific">Edwardsiella ictaluri (strain 93-146)</name>
    <dbReference type="NCBI Taxonomy" id="634503"/>
    <lineage>
        <taxon>Bacteria</taxon>
        <taxon>Pseudomonadati</taxon>
        <taxon>Pseudomonadota</taxon>
        <taxon>Gammaproteobacteria</taxon>
        <taxon>Enterobacterales</taxon>
        <taxon>Hafniaceae</taxon>
        <taxon>Edwardsiella</taxon>
    </lineage>
</organism>
<reference key="1">
    <citation type="submission" date="2009-03" db="EMBL/GenBank/DDBJ databases">
        <title>Complete genome sequence of Edwardsiella ictaluri 93-146.</title>
        <authorList>
            <person name="Williams M.L."/>
            <person name="Gillaspy A.F."/>
            <person name="Dyer D.W."/>
            <person name="Thune R.L."/>
            <person name="Waldbieser G.C."/>
            <person name="Schuster S.C."/>
            <person name="Gipson J."/>
            <person name="Zaitshik J."/>
            <person name="Landry C."/>
            <person name="Lawrence M.L."/>
        </authorList>
    </citation>
    <scope>NUCLEOTIDE SEQUENCE [LARGE SCALE GENOMIC DNA]</scope>
    <source>
        <strain>93-146</strain>
    </source>
</reference>
<protein>
    <recommendedName>
        <fullName evidence="1">S-ribosylhomocysteine lyase</fullName>
        <ecNumber evidence="1">4.4.1.21</ecNumber>
    </recommendedName>
    <alternativeName>
        <fullName evidence="1">AI-2 synthesis protein</fullName>
    </alternativeName>
    <alternativeName>
        <fullName evidence="1">Autoinducer-2 production protein LuxS</fullName>
    </alternativeName>
</protein>
<keyword id="KW-0071">Autoinducer synthesis</keyword>
<keyword id="KW-0408">Iron</keyword>
<keyword id="KW-0456">Lyase</keyword>
<keyword id="KW-0479">Metal-binding</keyword>
<keyword id="KW-0673">Quorum sensing</keyword>
<sequence length="171" mass="18972">MPLLDSFTVDHTRMAAPAVRIAKNMTTPHGDQITVFDLRFCRPNNAILPERGIHTLEHLFAGFMRDHLNGDGVEIIDISPMGCRTGFYMSLIGTPDEARVAAAWKAAMEDVLRVSDQRSIPELNEFQCGTYSMHSLEEAHQIARQILASGIGINHNDTLALSAEQLTHLHP</sequence>
<name>LUXS_EDWI9</name>